<reference key="1">
    <citation type="journal article" date="2007" name="J. Biol. Chem.">
        <title>FBXO11 promotes the neddylation of p53 and inhibits its transcriptional activity.</title>
        <authorList>
            <person name="Abida W.M."/>
            <person name="Nikolaev A."/>
            <person name="Zhao W."/>
            <person name="Zhang W."/>
            <person name="Gu W."/>
        </authorList>
    </citation>
    <scope>NUCLEOTIDE SEQUENCE [MRNA] (ISOFORM 1)</scope>
    <scope>FUNCTION</scope>
    <scope>SUBCELLULAR LOCATION</scope>
    <scope>IDENTIFICATION IN A COMPLEX WITH SKP1; CUL1 AND RBX1</scope>
</reference>
<reference key="2">
    <citation type="submission" date="2001-02" db="EMBL/GenBank/DDBJ databases">
        <title>Isolation of full-length cDNA clones from human fetal brain cDNA library.</title>
        <authorList>
            <person name="Mao Y.-M."/>
            <person name="Xie Y."/>
        </authorList>
    </citation>
    <scope>NUCLEOTIDE SEQUENCE [LARGE SCALE MRNA] (ISOFORM 3)</scope>
    <source>
        <tissue>Fetal brain</tissue>
    </source>
</reference>
<reference key="3">
    <citation type="submission" date="2005-04" db="EMBL/GenBank/DDBJ databases">
        <authorList>
            <person name="Totoki Y."/>
            <person name="Toyoda A."/>
            <person name="Takeda T."/>
            <person name="Sakaki Y."/>
            <person name="Tanaka A."/>
            <person name="Yokoyama S."/>
        </authorList>
    </citation>
    <scope>NUCLEOTIDE SEQUENCE [LARGE SCALE MRNA] (ISOFORM 6)</scope>
    <source>
        <tissue>Kidney</tissue>
    </source>
</reference>
<reference key="4">
    <citation type="journal article" date="2004" name="Nat. Genet.">
        <title>Complete sequencing and characterization of 21,243 full-length human cDNAs.</title>
        <authorList>
            <person name="Ota T."/>
            <person name="Suzuki Y."/>
            <person name="Nishikawa T."/>
            <person name="Otsuki T."/>
            <person name="Sugiyama T."/>
            <person name="Irie R."/>
            <person name="Wakamatsu A."/>
            <person name="Hayashi K."/>
            <person name="Sato H."/>
            <person name="Nagai K."/>
            <person name="Kimura K."/>
            <person name="Makita H."/>
            <person name="Sekine M."/>
            <person name="Obayashi M."/>
            <person name="Nishi T."/>
            <person name="Shibahara T."/>
            <person name="Tanaka T."/>
            <person name="Ishii S."/>
            <person name="Yamamoto J."/>
            <person name="Saito K."/>
            <person name="Kawai Y."/>
            <person name="Isono Y."/>
            <person name="Nakamura Y."/>
            <person name="Nagahari K."/>
            <person name="Murakami K."/>
            <person name="Yasuda T."/>
            <person name="Iwayanagi T."/>
            <person name="Wagatsuma M."/>
            <person name="Shiratori A."/>
            <person name="Sudo H."/>
            <person name="Hosoiri T."/>
            <person name="Kaku Y."/>
            <person name="Kodaira H."/>
            <person name="Kondo H."/>
            <person name="Sugawara M."/>
            <person name="Takahashi M."/>
            <person name="Kanda K."/>
            <person name="Yokoi T."/>
            <person name="Furuya T."/>
            <person name="Kikkawa E."/>
            <person name="Omura Y."/>
            <person name="Abe K."/>
            <person name="Kamihara K."/>
            <person name="Katsuta N."/>
            <person name="Sato K."/>
            <person name="Tanikawa M."/>
            <person name="Yamazaki M."/>
            <person name="Ninomiya K."/>
            <person name="Ishibashi T."/>
            <person name="Yamashita H."/>
            <person name="Murakawa K."/>
            <person name="Fujimori K."/>
            <person name="Tanai H."/>
            <person name="Kimata M."/>
            <person name="Watanabe M."/>
            <person name="Hiraoka S."/>
            <person name="Chiba Y."/>
            <person name="Ishida S."/>
            <person name="Ono Y."/>
            <person name="Takiguchi S."/>
            <person name="Watanabe S."/>
            <person name="Yosida M."/>
            <person name="Hotuta T."/>
            <person name="Kusano J."/>
            <person name="Kanehori K."/>
            <person name="Takahashi-Fujii A."/>
            <person name="Hara H."/>
            <person name="Tanase T.-O."/>
            <person name="Nomura Y."/>
            <person name="Togiya S."/>
            <person name="Komai F."/>
            <person name="Hara R."/>
            <person name="Takeuchi K."/>
            <person name="Arita M."/>
            <person name="Imose N."/>
            <person name="Musashino K."/>
            <person name="Yuuki H."/>
            <person name="Oshima A."/>
            <person name="Sasaki N."/>
            <person name="Aotsuka S."/>
            <person name="Yoshikawa Y."/>
            <person name="Matsunawa H."/>
            <person name="Ichihara T."/>
            <person name="Shiohata N."/>
            <person name="Sano S."/>
            <person name="Moriya S."/>
            <person name="Momiyama H."/>
            <person name="Satoh N."/>
            <person name="Takami S."/>
            <person name="Terashima Y."/>
            <person name="Suzuki O."/>
            <person name="Nakagawa S."/>
            <person name="Senoh A."/>
            <person name="Mizoguchi H."/>
            <person name="Goto Y."/>
            <person name="Shimizu F."/>
            <person name="Wakebe H."/>
            <person name="Hishigaki H."/>
            <person name="Watanabe T."/>
            <person name="Sugiyama A."/>
            <person name="Takemoto M."/>
            <person name="Kawakami B."/>
            <person name="Yamazaki M."/>
            <person name="Watanabe K."/>
            <person name="Kumagai A."/>
            <person name="Itakura S."/>
            <person name="Fukuzumi Y."/>
            <person name="Fujimori Y."/>
            <person name="Komiyama M."/>
            <person name="Tashiro H."/>
            <person name="Tanigami A."/>
            <person name="Fujiwara T."/>
            <person name="Ono T."/>
            <person name="Yamada K."/>
            <person name="Fujii Y."/>
            <person name="Ozaki K."/>
            <person name="Hirao M."/>
            <person name="Ohmori Y."/>
            <person name="Kawabata A."/>
            <person name="Hikiji T."/>
            <person name="Kobatake N."/>
            <person name="Inagaki H."/>
            <person name="Ikema Y."/>
            <person name="Okamoto S."/>
            <person name="Okitani R."/>
            <person name="Kawakami T."/>
            <person name="Noguchi S."/>
            <person name="Itoh T."/>
            <person name="Shigeta K."/>
            <person name="Senba T."/>
            <person name="Matsumura K."/>
            <person name="Nakajima Y."/>
            <person name="Mizuno T."/>
            <person name="Morinaga M."/>
            <person name="Sasaki M."/>
            <person name="Togashi T."/>
            <person name="Oyama M."/>
            <person name="Hata H."/>
            <person name="Watanabe M."/>
            <person name="Komatsu T."/>
            <person name="Mizushima-Sugano J."/>
            <person name="Satoh T."/>
            <person name="Shirai Y."/>
            <person name="Takahashi Y."/>
            <person name="Nakagawa K."/>
            <person name="Okumura K."/>
            <person name="Nagase T."/>
            <person name="Nomura N."/>
            <person name="Kikuchi H."/>
            <person name="Masuho Y."/>
            <person name="Yamashita R."/>
            <person name="Nakai K."/>
            <person name="Yada T."/>
            <person name="Nakamura Y."/>
            <person name="Ohara O."/>
            <person name="Isogai T."/>
            <person name="Sugano S."/>
        </authorList>
    </citation>
    <scope>NUCLEOTIDE SEQUENCE [LARGE SCALE MRNA] (ISOFORMS 2 AND 6)</scope>
    <scope>NUCLEOTIDE SEQUENCE [LARGE SCALE MRNA] OF 646-927 (ISOFORM 1)</scope>
    <source>
        <tissue>Hepatoma</tissue>
        <tissue>Teratocarcinoma</tissue>
    </source>
</reference>
<reference key="5">
    <citation type="journal article" date="2005" name="Nature">
        <title>Generation and annotation of the DNA sequences of human chromosomes 2 and 4.</title>
        <authorList>
            <person name="Hillier L.W."/>
            <person name="Graves T.A."/>
            <person name="Fulton R.S."/>
            <person name="Fulton L.A."/>
            <person name="Pepin K.H."/>
            <person name="Minx P."/>
            <person name="Wagner-McPherson C."/>
            <person name="Layman D."/>
            <person name="Wylie K."/>
            <person name="Sekhon M."/>
            <person name="Becker M.C."/>
            <person name="Fewell G.A."/>
            <person name="Delehaunty K.D."/>
            <person name="Miner T.L."/>
            <person name="Nash W.E."/>
            <person name="Kremitzki C."/>
            <person name="Oddy L."/>
            <person name="Du H."/>
            <person name="Sun H."/>
            <person name="Bradshaw-Cordum H."/>
            <person name="Ali J."/>
            <person name="Carter J."/>
            <person name="Cordes M."/>
            <person name="Harris A."/>
            <person name="Isak A."/>
            <person name="van Brunt A."/>
            <person name="Nguyen C."/>
            <person name="Du F."/>
            <person name="Courtney L."/>
            <person name="Kalicki J."/>
            <person name="Ozersky P."/>
            <person name="Abbott S."/>
            <person name="Armstrong J."/>
            <person name="Belter E.A."/>
            <person name="Caruso L."/>
            <person name="Cedroni M."/>
            <person name="Cotton M."/>
            <person name="Davidson T."/>
            <person name="Desai A."/>
            <person name="Elliott G."/>
            <person name="Erb T."/>
            <person name="Fronick C."/>
            <person name="Gaige T."/>
            <person name="Haakenson W."/>
            <person name="Haglund K."/>
            <person name="Holmes A."/>
            <person name="Harkins R."/>
            <person name="Kim K."/>
            <person name="Kruchowski S.S."/>
            <person name="Strong C.M."/>
            <person name="Grewal N."/>
            <person name="Goyea E."/>
            <person name="Hou S."/>
            <person name="Levy A."/>
            <person name="Martinka S."/>
            <person name="Mead K."/>
            <person name="McLellan M.D."/>
            <person name="Meyer R."/>
            <person name="Randall-Maher J."/>
            <person name="Tomlinson C."/>
            <person name="Dauphin-Kohlberg S."/>
            <person name="Kozlowicz-Reilly A."/>
            <person name="Shah N."/>
            <person name="Swearengen-Shahid S."/>
            <person name="Snider J."/>
            <person name="Strong J.T."/>
            <person name="Thompson J."/>
            <person name="Yoakum M."/>
            <person name="Leonard S."/>
            <person name="Pearman C."/>
            <person name="Trani L."/>
            <person name="Radionenko M."/>
            <person name="Waligorski J.E."/>
            <person name="Wang C."/>
            <person name="Rock S.M."/>
            <person name="Tin-Wollam A.-M."/>
            <person name="Maupin R."/>
            <person name="Latreille P."/>
            <person name="Wendl M.C."/>
            <person name="Yang S.-P."/>
            <person name="Pohl C."/>
            <person name="Wallis J.W."/>
            <person name="Spieth J."/>
            <person name="Bieri T.A."/>
            <person name="Berkowicz N."/>
            <person name="Nelson J.O."/>
            <person name="Osborne J."/>
            <person name="Ding L."/>
            <person name="Meyer R."/>
            <person name="Sabo A."/>
            <person name="Shotland Y."/>
            <person name="Sinha P."/>
            <person name="Wohldmann P.E."/>
            <person name="Cook L.L."/>
            <person name="Hickenbotham M.T."/>
            <person name="Eldred J."/>
            <person name="Williams D."/>
            <person name="Jones T.A."/>
            <person name="She X."/>
            <person name="Ciccarelli F.D."/>
            <person name="Izaurralde E."/>
            <person name="Taylor J."/>
            <person name="Schmutz J."/>
            <person name="Myers R.M."/>
            <person name="Cox D.R."/>
            <person name="Huang X."/>
            <person name="McPherson J.D."/>
            <person name="Mardis E.R."/>
            <person name="Clifton S.W."/>
            <person name="Warren W.C."/>
            <person name="Chinwalla A.T."/>
            <person name="Eddy S.R."/>
            <person name="Marra M.A."/>
            <person name="Ovcharenko I."/>
            <person name="Furey T.S."/>
            <person name="Miller W."/>
            <person name="Eichler E.E."/>
            <person name="Bork P."/>
            <person name="Suyama M."/>
            <person name="Torrents D."/>
            <person name="Waterston R.H."/>
            <person name="Wilson R.K."/>
        </authorList>
    </citation>
    <scope>NUCLEOTIDE SEQUENCE [LARGE SCALE GENOMIC DNA]</scope>
</reference>
<reference key="6">
    <citation type="submission" date="2005-09" db="EMBL/GenBank/DDBJ databases">
        <authorList>
            <person name="Mural R.J."/>
            <person name="Istrail S."/>
            <person name="Sutton G."/>
            <person name="Florea L."/>
            <person name="Halpern A.L."/>
            <person name="Mobarry C.M."/>
            <person name="Lippert R."/>
            <person name="Walenz B."/>
            <person name="Shatkay H."/>
            <person name="Dew I."/>
            <person name="Miller J.R."/>
            <person name="Flanigan M.J."/>
            <person name="Edwards N.J."/>
            <person name="Bolanos R."/>
            <person name="Fasulo D."/>
            <person name="Halldorsson B.V."/>
            <person name="Hannenhalli S."/>
            <person name="Turner R."/>
            <person name="Yooseph S."/>
            <person name="Lu F."/>
            <person name="Nusskern D.R."/>
            <person name="Shue B.C."/>
            <person name="Zheng X.H."/>
            <person name="Zhong F."/>
            <person name="Delcher A.L."/>
            <person name="Huson D.H."/>
            <person name="Kravitz S.A."/>
            <person name="Mouchard L."/>
            <person name="Reinert K."/>
            <person name="Remington K.A."/>
            <person name="Clark A.G."/>
            <person name="Waterman M.S."/>
            <person name="Eichler E.E."/>
            <person name="Adams M.D."/>
            <person name="Hunkapiller M.W."/>
            <person name="Myers E.W."/>
            <person name="Venter J.C."/>
        </authorList>
    </citation>
    <scope>NUCLEOTIDE SEQUENCE [LARGE SCALE GENOMIC DNA]</scope>
</reference>
<reference key="7">
    <citation type="journal article" date="2004" name="Genome Res.">
        <title>The status, quality, and expansion of the NIH full-length cDNA project: the Mammalian Gene Collection (MGC).</title>
        <authorList>
            <consortium name="The MGC Project Team"/>
        </authorList>
    </citation>
    <scope>NUCLEOTIDE SEQUENCE [LARGE SCALE MRNA] (ISOFORM 6)</scope>
    <scope>NUCLEOTIDE SEQUENCE [LARGE SCALE MRNA] OF 15-927 (ISOFORM 1)</scope>
    <source>
        <tissue>Brain</tissue>
        <tissue>Ovary</tissue>
        <tissue>Testis</tissue>
    </source>
</reference>
<reference key="8">
    <citation type="journal article" date="1999" name="Curr. Biol.">
        <title>Identification of a family of human F-box proteins.</title>
        <authorList>
            <person name="Cenciarelli C."/>
            <person name="Chiaur D.S."/>
            <person name="Guardavaccaro D."/>
            <person name="Parks W."/>
            <person name="Vidal M."/>
            <person name="Pagano M."/>
        </authorList>
    </citation>
    <scope>NUCLEOTIDE SEQUENCE [MRNA] OF 16-212</scope>
</reference>
<reference key="9">
    <citation type="journal article" date="1999" name="Curr. Biol.">
        <title>A family of mammalian F-box proteins.</title>
        <authorList>
            <person name="Winston J.T."/>
            <person name="Koepp D.M."/>
            <person name="Zhu C."/>
            <person name="Elledge S.J."/>
            <person name="Harper J.W."/>
        </authorList>
    </citation>
    <scope>NUCLEOTIDE SEQUENCE [MRNA] OF 20-927 (ISOFORM 4)</scope>
</reference>
<reference key="10">
    <citation type="journal article" date="2007" name="BMC Genomics">
        <title>The full-ORF clone resource of the German cDNA consortium.</title>
        <authorList>
            <person name="Bechtel S."/>
            <person name="Rosenfelder H."/>
            <person name="Duda A."/>
            <person name="Schmidt C.P."/>
            <person name="Ernst U."/>
            <person name="Wellenreuther R."/>
            <person name="Mehrle A."/>
            <person name="Schuster C."/>
            <person name="Bahr A."/>
            <person name="Bloecker H."/>
            <person name="Heubner D."/>
            <person name="Hoerlein A."/>
            <person name="Michel G."/>
            <person name="Wedler H."/>
            <person name="Koehrer K."/>
            <person name="Ottenwaelder B."/>
            <person name="Poustka A."/>
            <person name="Wiemann S."/>
            <person name="Schupp I."/>
        </authorList>
    </citation>
    <scope>NUCLEOTIDE SEQUENCE [LARGE SCALE MRNA] OF 720-927</scope>
    <source>
        <tissue>Brain</tissue>
    </source>
</reference>
<reference key="11">
    <citation type="journal article" date="2001" name="Pigment Cell Res.">
        <title>'VIT1', a novel gene associated with vitiligo.</title>
        <authorList>
            <person name="Le Poole I.C."/>
            <person name="Sarangarajan R."/>
            <person name="Zhao Y."/>
            <person name="Stennett L.S."/>
            <person name="Brown T.L."/>
            <person name="Sheth P."/>
            <person name="Miki T."/>
            <person name="Boissy R.E."/>
        </authorList>
    </citation>
    <scope>NUCLEOTIDE SEQUENCE [MRNA] OF 744-927 (ISOFORM 5)</scope>
    <scope>TISSUE SPECIFICITY</scope>
</reference>
<reference key="12">
    <citation type="journal article" date="2006" name="Biochem. Biophys. Res. Commun.">
        <title>FBXO11/PRMT9, a new protein arginine methyltransferase, symmetrically dimethylates arginine residues.</title>
        <authorList>
            <person name="Cook J.R."/>
            <person name="Lee J.H."/>
            <person name="Yang Z.H."/>
            <person name="Krause C.D."/>
            <person name="Herth N."/>
            <person name="Hoffmann R."/>
            <person name="Pestka S."/>
        </authorList>
    </citation>
    <scope>SUBCELLULAR LOCATION</scope>
    <scope>ALTERNATIVE SPLICING</scope>
    <scope>CAUTION (ISOFORM 2)</scope>
</reference>
<reference key="13">
    <citation type="journal article" date="2013" name="Cell Cycle">
        <title>Regulation of TGF-beta signaling, exit from the cell cycle, and cellular migration through cullin cross-regulation: SCF-FBXO11 turns off CRL4-Cdt2.</title>
        <authorList>
            <person name="Abbas T."/>
            <person name="Keaton M."/>
            <person name="Dutta A."/>
        </authorList>
    </citation>
    <scope>FUNCTION</scope>
    <scope>SUBCELLULAR LOCATION</scope>
    <scope>DEVELOPMENTAL STAGE</scope>
</reference>
<reference key="14">
    <citation type="journal article" date="2013" name="J. Proteome Res.">
        <title>Toward a comprehensive characterization of a human cancer cell phosphoproteome.</title>
        <authorList>
            <person name="Zhou H."/>
            <person name="Di Palma S."/>
            <person name="Preisinger C."/>
            <person name="Peng M."/>
            <person name="Polat A.N."/>
            <person name="Heck A.J."/>
            <person name="Mohammed S."/>
        </authorList>
    </citation>
    <scope>IDENTIFICATION BY MASS SPECTROMETRY [LARGE SCALE ANALYSIS]</scope>
    <source>
        <tissue>Erythroleukemia</tissue>
    </source>
</reference>
<reference key="15">
    <citation type="journal article" date="2013" name="Mol. Cell">
        <title>CRL1-FBXO11 promotes Cdt2 ubiquitylation and degradation and regulates Pr-Set7/Set8-mediated cellular migration.</title>
        <authorList>
            <person name="Abbas T."/>
            <person name="Mueller A.C."/>
            <person name="Shibata E."/>
            <person name="Keaton M."/>
            <person name="Rossi M."/>
            <person name="Dutta A."/>
        </authorList>
    </citation>
    <scope>FUNCTION IN UBIQUITINATION OF DTL</scope>
</reference>
<reference key="16">
    <citation type="journal article" date="2013" name="Mol. Cell">
        <title>Regulation of the CRL4(Cdt2) ubiquitin ligase and cell-cycle exit by the SCF(Fbxo11) ubiquitin ligase.</title>
        <authorList>
            <person name="Rossi M."/>
            <person name="Duan S."/>
            <person name="Jeong Y.T."/>
            <person name="Horn M."/>
            <person name="Saraf A."/>
            <person name="Florens L."/>
            <person name="Washburn M.P."/>
            <person name="Antebi A."/>
            <person name="Pagano M."/>
        </authorList>
    </citation>
    <scope>FUNCTION IN UBIQUITINATION OF DTL</scope>
</reference>
<reference key="17">
    <citation type="journal article" date="2014" name="Dev. Cell">
        <title>DRE-1/FBXO11-dependent degradation of BLMP-1/BLIMP-1 governs C. elegans developmental timing and maturation.</title>
        <authorList>
            <person name="Horn M."/>
            <person name="Geisen C."/>
            <person name="Cermak L."/>
            <person name="Becker B."/>
            <person name="Nakamura S."/>
            <person name="Klein C."/>
            <person name="Pagano M."/>
            <person name="Antebi A."/>
        </authorList>
    </citation>
    <scope>FUNCTION IN UBIQUITINATION OF PRDM1</scope>
    <scope>MUTAGENESIS OF GLN-575</scope>
</reference>
<reference key="18">
    <citation type="journal article" date="2014" name="PLoS Genet.">
        <title>BLMP-1/Blimp-1 regulates the spatiotemporal cell migration pattern in C. elegans.</title>
        <authorList>
            <person name="Huang T.F."/>
            <person name="Cho C.Y."/>
            <person name="Cheng Y.T."/>
            <person name="Huang J.W."/>
            <person name="Wu Y.Z."/>
            <person name="Yeh A.Y."/>
            <person name="Nishiwaki K."/>
            <person name="Chang S.C."/>
            <person name="Wu Y.C."/>
        </authorList>
    </citation>
    <scope>FUNCTION</scope>
</reference>
<reference key="19">
    <citation type="journal article" date="2015" name="Cancer Lett.">
        <title>FBXO11 promotes ubiquitination of the Snail family of transcription factors in cancer progression and epidermal development.</title>
        <authorList>
            <person name="Jin Y."/>
            <person name="Shenoy A.K."/>
            <person name="Doernberg S."/>
            <person name="Chen H."/>
            <person name="Luo H."/>
            <person name="Shen H."/>
            <person name="Lin T."/>
            <person name="Tarrash M."/>
            <person name="Cai Q."/>
            <person name="Hu X."/>
            <person name="Fiske R."/>
            <person name="Chen T."/>
            <person name="Wu L."/>
            <person name="Mohammed K.A."/>
            <person name="Rottiers V."/>
            <person name="Lee S.S."/>
            <person name="Lu J."/>
        </authorList>
    </citation>
    <scope>FUNCTION</scope>
    <scope>PATHWAY</scope>
    <scope>SUBCELLULAR LOCATION</scope>
</reference>
<reference key="20">
    <citation type="journal article" date="2018" name="Oncogene">
        <title>SPSB3 targets SNAIL for degradation in GSK-3beta phosphorylation-dependent manner and regulates metastasis.</title>
        <authorList>
            <person name="Liu Y."/>
            <person name="Zhou H."/>
            <person name="Zhu R."/>
            <person name="Ding F."/>
            <person name="Li Y."/>
            <person name="Cao X."/>
            <person name="Liu Z."/>
        </authorList>
    </citation>
    <scope>FUNCTION</scope>
    <scope>PATHWAY</scope>
</reference>
<reference key="21">
    <citation type="journal article" date="2021" name="Blood">
        <title>FBXO11-mediated proteolysis of BAHD1 relieves PRC2-dependent transcriptional repression in erythropoiesis.</title>
        <authorList>
            <person name="Xu P."/>
            <person name="Scott D.C."/>
            <person name="Xu B."/>
            <person name="Yao Y."/>
            <person name="Feng R."/>
            <person name="Cheng L."/>
            <person name="Mayberry K."/>
            <person name="Wang Y.D."/>
            <person name="Bi W."/>
            <person name="Palmer L.E."/>
            <person name="King M.T."/>
            <person name="Wang H."/>
            <person name="Li Y."/>
            <person name="Fan Y."/>
            <person name="Alpi A.F."/>
            <person name="Li C."/>
            <person name="Peng J."/>
            <person name="Papizan J."/>
            <person name="Pruett-Miller S.M."/>
            <person name="Spallek R."/>
            <person name="Bassermann F."/>
            <person name="Cheng Y."/>
            <person name="Schulman B.A."/>
            <person name="Weiss M.J."/>
        </authorList>
    </citation>
    <scope>FUNCTION</scope>
</reference>
<reference key="22">
    <citation type="journal article" date="2023" name="Life. Sci Alliance">
        <title>FBXO11 governs macrophage cell death and inflammation in response to bacterial toxins.</title>
        <authorList>
            <person name="Jeon Y."/>
            <person name="Chow S.H."/>
            <person name="Stuart I."/>
            <person name="Weir A."/>
            <person name="Yeung A.T."/>
            <person name="Hale C."/>
            <person name="Sridhar S."/>
            <person name="Dougan G."/>
            <person name="Vince J.E."/>
            <person name="Naderer T."/>
        </authorList>
    </citation>
    <scope>FUNCTION</scope>
</reference>
<reference key="23">
    <citation type="journal article" date="2023" name="Proc. Natl. Acad. Sci. U.S.A.">
        <title>FBXO11 constitutes a major negative regulator of MHC class II through ubiquitin-dependent proteasomal degradation of CIITA.</title>
        <authorList>
            <person name="Kasuga Y."/>
            <person name="Ouda R."/>
            <person name="Watanabe M."/>
            <person name="Sun X."/>
            <person name="Kimura M."/>
            <person name="Hatakeyama S."/>
            <person name="Kobayashi K.S."/>
        </authorList>
    </citation>
    <scope>FUNCTION</scope>
    <scope>INTERACTION WITH CIITA</scope>
</reference>
<reference key="24">
    <citation type="journal article" date="2023" name="J. Med. Virol.">
        <title>FBXO11 amplifies type I interferon signaling to exert antiviral effects by facilitating the assemble of TRAF3-TBK1-IRF3 complex.</title>
        <authorList>
            <person name="Gao L."/>
            <person name="Gao Y."/>
            <person name="Han K."/>
            <person name="Wang Z."/>
            <person name="Meng F."/>
            <person name="Liu J."/>
            <person name="Zhao X."/>
            <person name="Shao Y."/>
            <person name="Shen J."/>
            <person name="Sun W."/>
            <person name="Liu Y."/>
            <person name="Xu H."/>
            <person name="Du X."/>
            <person name="Li J."/>
            <person name="Qin F.X."/>
        </authorList>
    </citation>
    <scope>FUNCTION</scope>
</reference>
<reference key="25">
    <citation type="journal article" date="2012" name="Nature">
        <title>FBXO11 targets BCL6 for degradation and is inactivated in diffuse large B-cell lymphomas.</title>
        <authorList>
            <person name="Duan S."/>
            <person name="Cermak L."/>
            <person name="Pagan J.K."/>
            <person name="Rossi M."/>
            <person name="Martinengo C."/>
            <person name="di Celle P.F."/>
            <person name="Chapuy B."/>
            <person name="Shipp M."/>
            <person name="Chiarle R."/>
            <person name="Pagano M."/>
        </authorList>
    </citation>
    <scope>VARIANTS CYS-206; CYS-644; GLU-684; ASN-715 AND GLN-715</scope>
    <scope>CHARACTERIZATION OF VARIANTS CYS-644; GLU-684; ASN-715 AND GLN-715</scope>
    <scope>FUNCTION IN UBIQUITINATION OF BCL6</scope>
    <scope>IDENTIFICATION IN THE SCF(FBXO11) COMPLEX</scope>
    <scope>SUBCELLULAR LOCATION</scope>
    <scope>INVOLVEMENT IN LYMPHOMA</scope>
</reference>
<reference key="26">
    <citation type="journal article" date="2017" name="J. Med. Genet.">
        <title>High diagnostic yield of syndromic intellectual disability by targeted next-generation sequencing.</title>
        <authorList>
            <person name="Martinez F."/>
            <person name="Caro-Llopis A."/>
            <person name="Rosello M."/>
            <person name="Oltra S."/>
            <person name="Mayo S."/>
            <person name="Monfort S."/>
            <person name="Orellana C."/>
        </authorList>
    </citation>
    <scope>INVOLVEMENT IN IDDFBA</scope>
    <scope>VARIANT IDDFBA 913-TYR--ASN-927 DEL</scope>
</reference>
<reference key="27">
    <citation type="journal article" date="2018" name="Am. J. Hum. Genet.">
        <title>De Novo Variants in the F-Box Protein FBXO11 in 20 Individuals with a Variable Neurodevelopmental Disorder.</title>
        <authorList>
            <consortium name="University of Washington Center for Mendelian Genomics"/>
            <consortium name="DDD Study"/>
            <person name="Gregor A."/>
            <person name="Sadleir L.G."/>
            <person name="Asadollahi R."/>
            <person name="Azzarello-Burri S."/>
            <person name="Battaglia A."/>
            <person name="Ousager L.B."/>
            <person name="Boonsawat P."/>
            <person name="Bruel A.L."/>
            <person name="Buchert R."/>
            <person name="Calpena E."/>
            <person name="Cogne B."/>
            <person name="Dallapiccola B."/>
            <person name="Distelmaier F."/>
            <person name="Elmslie F."/>
            <person name="Faivre L."/>
            <person name="Haack T.B."/>
            <person name="Harrison V."/>
            <person name="Henderson A."/>
            <person name="Hunt D."/>
            <person name="Isidor B."/>
            <person name="Joset P."/>
            <person name="Kumada S."/>
            <person name="Lachmeijer A.M.A."/>
            <person name="Lees M."/>
            <person name="Lynch S.A."/>
            <person name="Martinez F."/>
            <person name="Matsumoto N."/>
            <person name="McDougall C."/>
            <person name="Mefford H.C."/>
            <person name="Miyake N."/>
            <person name="Myers C.T."/>
            <person name="Moutton S."/>
            <person name="Nesbitt A."/>
            <person name="Novelli A."/>
            <person name="Orellana C."/>
            <person name="Rauch A."/>
            <person name="Rosello M."/>
            <person name="Saida K."/>
            <person name="Santani A.B."/>
            <person name="Sarkar A."/>
            <person name="Scheffer I.E."/>
            <person name="Shinawi M."/>
            <person name="Steindl K."/>
            <person name="Symonds J.D."/>
            <person name="Zackai E.H."/>
            <person name="Reis A."/>
            <person name="Sticht H."/>
            <person name="Zweier C."/>
        </authorList>
    </citation>
    <scope>INVOLVEMENT IN IDDFBA</scope>
    <scope>VARIANTS IDDFBA SER-138; ARG-156; VAL-538; 609-GLU--ASN-927 DEL; ARG-623; 697-GLY--ASN-927 DEL; PRO-840; ASP-892; 904-GLU--ASN-927 DEL; ARG-905 AND GLY-910</scope>
</reference>
<reference key="28">
    <citation type="journal article" date="2018" name="Hum. Genet.">
        <title>De novo FBXO11 mutations are associated with intellectual disability and behavioural anomalies.</title>
        <authorList>
            <person name="Fritzen D."/>
            <person name="Kuechler A."/>
            <person name="Grimmel M."/>
            <person name="Becker J."/>
            <person name="Peters S."/>
            <person name="Sturm M."/>
            <person name="Hundertmark H."/>
            <person name="Schmidt A."/>
            <person name="Kreiss M."/>
            <person name="Strom T.M."/>
            <person name="Wieczorek D."/>
            <person name="Haack T.B."/>
            <person name="Beck-Woedl S."/>
            <person name="Cremer K."/>
            <person name="Engels H."/>
        </authorList>
    </citation>
    <scope>INVOLVEMENT IN IDDFBA</scope>
    <scope>VARIANT IDDFBA 913-TYR--ASN-927 DEL</scope>
</reference>
<reference key="29">
    <citation type="journal article" date="2017" name="JAMA Psychiatry">
        <title>Diagnostic yield and novel candidate genes by exome sequencing in 152 consanguineous families with neurodevelopmental disorders.</title>
        <authorList>
            <person name="Reuter M.S."/>
            <person name="Tawamie H."/>
            <person name="Buchert R."/>
            <person name="Hosny Gebril O."/>
            <person name="Froukh T."/>
            <person name="Thiel C."/>
            <person name="Uebe S."/>
            <person name="Ekici A.B."/>
            <person name="Krumbiegel M."/>
            <person name="Zweier C."/>
            <person name="Hoyer J."/>
            <person name="Eberlein K."/>
            <person name="Bauer J."/>
            <person name="Scheller U."/>
            <person name="Strom T.M."/>
            <person name="Hoffjan S."/>
            <person name="Abdelraouf E.R."/>
            <person name="Meguid N.A."/>
            <person name="Abboud A."/>
            <person name="Al Khateeb M.A."/>
            <person name="Fakher M."/>
            <person name="Hamdan S."/>
            <person name="Ismael A."/>
            <person name="Muhammad S."/>
            <person name="Abdallah E."/>
            <person name="Sticht H."/>
            <person name="Wieczorek D."/>
            <person name="Reis A."/>
            <person name="Abou Jamra R."/>
        </authorList>
    </citation>
    <scope>VARIANT MET-866</scope>
</reference>
<keyword id="KW-0002">3D-structure</keyword>
<keyword id="KW-0025">Alternative splicing</keyword>
<keyword id="KW-0158">Chromosome</keyword>
<keyword id="KW-0225">Disease variant</keyword>
<keyword id="KW-0991">Intellectual disability</keyword>
<keyword id="KW-0479">Metal-binding</keyword>
<keyword id="KW-0539">Nucleus</keyword>
<keyword id="KW-1267">Proteomics identification</keyword>
<keyword id="KW-1185">Reference proteome</keyword>
<keyword id="KW-0677">Repeat</keyword>
<keyword id="KW-0833">Ubl conjugation pathway</keyword>
<keyword id="KW-0862">Zinc</keyword>
<keyword id="KW-0863">Zinc-finger</keyword>
<sequence length="927" mass="103585">MNSVRAANRRPRRVSRPRPVQQQQQQPPQQPPPQPPQQQPPQQQPPPPPQQQQQQQPPPPPPPPPPLPQERNNVGERDDDVPADMVAEESGPGAQNSPYQLRRKTLLPKRTACPTKNSMEGASTSTTENFGHRAKRARVSGKSQDLSAAPAEQYLQEKLPDEVVLKIFSYLLEQDLCRAACVCKRFSELANDPILWKRLYMEVFEYTRPMMHPEPGKFYQINPEEYEHPNPWKESFQQLYKGAHVKPGFAEHFYSNPARYKGRENMLYYDTIEDALGGVQEAHFDGLIFVHSGIYTDEWIYIESPITMIGAAPGKVADKVIIENTRDSTFVFMEGSEDAYVGYMTIRFNPDDKSAQHHNAHHCLEITVNCSPIIDHCIIRSTCTVGSAVCVSGQGACPTIKHCNISDCENVGLYITDHAQGIYEDNEISNNALAGIWVKNHGNPIIRRNHIHHGRDVGVFTFDHGMGYFESCNIHRNRIAGFEVKAYANPTVVRCEIHHGQTGGIYVHEKGRGQFIENKIYANNFAGVWITSNSDPTIRGNSIFNGNQGGVYIFGDGRGLIEGNDIYGNALAGIQIRTNSCPIVRHNKIHDGQHGGIYVHEKGQGVIEENEVYSNTLAGVWVTTGSTPVLRRNRIHSGKQVGVYFYDNGHGVLEDNDIYNHMYSGVQIRTGSNPKIRRNKIWGGQNGGILVYNSGLGCIEDNEIFDNAMAGVWIKTDSNPTLRRNKIHDGRDGGICIFNGGRGLLEENDIFRNAQAGVLISTNSHPILRKNRIFDGFAAGIEITNHATATLEGNQIFNNRFGGLFLASGVNVTMKDNKIMNNQDAIEKAVSRGQCLYKISSYTSYPMHDFYRCHTCNTTDRNAICVNCIKKCHQGHDVEFIRHDRFFCDCGAGTLSNPCTLAGEPTHDTDTLYDSAPPIESNTLQHN</sequence>
<dbReference type="EMBL" id="AY827075">
    <property type="protein sequence ID" value="AAV87312.1"/>
    <property type="molecule type" value="mRNA"/>
</dbReference>
<dbReference type="EMBL" id="AF351618">
    <property type="protein sequence ID" value="AAN76518.1"/>
    <property type="status" value="ALT_SEQ"/>
    <property type="molecule type" value="mRNA"/>
</dbReference>
<dbReference type="EMBL" id="AK223592">
    <property type="protein sequence ID" value="BAD97312.1"/>
    <property type="molecule type" value="mRNA"/>
</dbReference>
<dbReference type="EMBL" id="AK022735">
    <property type="protein sequence ID" value="BAB14214.1"/>
    <property type="molecule type" value="mRNA"/>
</dbReference>
<dbReference type="EMBL" id="AK025477">
    <property type="protein sequence ID" value="BAB15143.1"/>
    <property type="status" value="ALT_INIT"/>
    <property type="molecule type" value="mRNA"/>
</dbReference>
<dbReference type="EMBL" id="AK292877">
    <property type="protein sequence ID" value="BAF85566.1"/>
    <property type="molecule type" value="mRNA"/>
</dbReference>
<dbReference type="EMBL" id="AC006509">
    <property type="status" value="NOT_ANNOTATED_CDS"/>
    <property type="molecule type" value="Genomic_DNA"/>
</dbReference>
<dbReference type="EMBL" id="AC079807">
    <property type="protein sequence ID" value="AAY24083.1"/>
    <property type="status" value="ALT_SEQ"/>
    <property type="molecule type" value="Genomic_DNA"/>
</dbReference>
<dbReference type="EMBL" id="CH471053">
    <property type="protein sequence ID" value="EAX00205.1"/>
    <property type="molecule type" value="Genomic_DNA"/>
</dbReference>
<dbReference type="EMBL" id="BC012728">
    <property type="protein sequence ID" value="AAH12728.2"/>
    <property type="molecule type" value="mRNA"/>
</dbReference>
<dbReference type="EMBL" id="BC043258">
    <property type="protein sequence ID" value="AAH43258.2"/>
    <property type="molecule type" value="mRNA"/>
</dbReference>
<dbReference type="EMBL" id="BC130445">
    <property type="protein sequence ID" value="AAI30446.1"/>
    <property type="molecule type" value="mRNA"/>
</dbReference>
<dbReference type="EMBL" id="BC136480">
    <property type="protein sequence ID" value="AAI36481.1"/>
    <property type="molecule type" value="mRNA"/>
</dbReference>
<dbReference type="EMBL" id="AF174599">
    <property type="protein sequence ID" value="AAF04520.1"/>
    <property type="molecule type" value="mRNA"/>
</dbReference>
<dbReference type="EMBL" id="AF176706">
    <property type="protein sequence ID" value="AAF17611.1"/>
    <property type="molecule type" value="mRNA"/>
</dbReference>
<dbReference type="EMBL" id="AL117620">
    <property type="protein sequence ID" value="CAB56019.1"/>
    <property type="molecule type" value="mRNA"/>
</dbReference>
<dbReference type="EMBL" id="AF264714">
    <property type="protein sequence ID" value="AAF76888.1"/>
    <property type="status" value="ALT_SEQ"/>
    <property type="molecule type" value="mRNA"/>
</dbReference>
<dbReference type="CCDS" id="CCDS1837.1">
    <molecule id="Q86XK2-6"/>
</dbReference>
<dbReference type="CCDS" id="CCDS54357.1">
    <molecule id="Q86XK2-1"/>
</dbReference>
<dbReference type="PIR" id="T17329">
    <property type="entry name" value="T17329"/>
</dbReference>
<dbReference type="RefSeq" id="NP_001177203.1">
    <molecule id="Q86XK2-1"/>
    <property type="nucleotide sequence ID" value="NM_001190274.2"/>
</dbReference>
<dbReference type="RefSeq" id="NP_001361254.1">
    <molecule id="Q86XK2-6"/>
    <property type="nucleotide sequence ID" value="NM_001374325.1"/>
</dbReference>
<dbReference type="RefSeq" id="NP_079409.3">
    <molecule id="Q86XK2-6"/>
    <property type="nucleotide sequence ID" value="NM_025133.4"/>
</dbReference>
<dbReference type="RefSeq" id="XP_005264629.1">
    <molecule id="Q86XK2-5"/>
    <property type="nucleotide sequence ID" value="XM_005264572.6"/>
</dbReference>
<dbReference type="RefSeq" id="XP_016860506.1">
    <property type="nucleotide sequence ID" value="XM_017005017.1"/>
</dbReference>
<dbReference type="RefSeq" id="XP_047301877.1">
    <molecule id="Q86XK2-6"/>
    <property type="nucleotide sequence ID" value="XM_047445921.1"/>
</dbReference>
<dbReference type="RefSeq" id="XP_054200016.1">
    <molecule id="Q86XK2-5"/>
    <property type="nucleotide sequence ID" value="XM_054344041.1"/>
</dbReference>
<dbReference type="RefSeq" id="XP_054200022.1">
    <molecule id="Q86XK2-6"/>
    <property type="nucleotide sequence ID" value="XM_054344047.1"/>
</dbReference>
<dbReference type="PDB" id="5VMD">
    <property type="method" value="X-ray"/>
    <property type="resolution" value="2.20 A"/>
    <property type="chains" value="A/B/C/D=833-904"/>
</dbReference>
<dbReference type="PDBsum" id="5VMD"/>
<dbReference type="SMR" id="Q86XK2"/>
<dbReference type="BioGRID" id="123173">
    <property type="interactions" value="148"/>
</dbReference>
<dbReference type="ComplexPortal" id="CPX-7924">
    <property type="entry name" value="SCF E3 ubiquitin ligase complex, FBXO11 variant"/>
</dbReference>
<dbReference type="CORUM" id="Q86XK2"/>
<dbReference type="DIP" id="DIP-35680N"/>
<dbReference type="FunCoup" id="Q86XK2">
    <property type="interactions" value="4657"/>
</dbReference>
<dbReference type="IntAct" id="Q86XK2">
    <property type="interactions" value="92"/>
</dbReference>
<dbReference type="MINT" id="Q86XK2"/>
<dbReference type="STRING" id="9606.ENSP00000384823"/>
<dbReference type="ChEMBL" id="CHEMBL4879484"/>
<dbReference type="iPTMnet" id="Q86XK2"/>
<dbReference type="PhosphoSitePlus" id="Q86XK2"/>
<dbReference type="BioMuta" id="FBXO11"/>
<dbReference type="DMDM" id="124012093"/>
<dbReference type="jPOST" id="Q86XK2"/>
<dbReference type="MassIVE" id="Q86XK2"/>
<dbReference type="PaxDb" id="9606-ENSP00000384823"/>
<dbReference type="PeptideAtlas" id="Q86XK2"/>
<dbReference type="ProteomicsDB" id="149"/>
<dbReference type="ProteomicsDB" id="70286">
    <molecule id="Q86XK2-1"/>
</dbReference>
<dbReference type="ProteomicsDB" id="70287">
    <molecule id="Q86XK2-2"/>
</dbReference>
<dbReference type="ProteomicsDB" id="70288">
    <molecule id="Q86XK2-3"/>
</dbReference>
<dbReference type="ProteomicsDB" id="70289">
    <molecule id="Q86XK2-4"/>
</dbReference>
<dbReference type="ProteomicsDB" id="70290">
    <molecule id="Q86XK2-5"/>
</dbReference>
<dbReference type="Pumba" id="Q86XK2"/>
<dbReference type="Antibodypedia" id="15211">
    <property type="antibodies" value="356 antibodies from 29 providers"/>
</dbReference>
<dbReference type="DNASU" id="80204"/>
<dbReference type="Ensembl" id="ENST00000402508.5">
    <molecule id="Q86XK2-6"/>
    <property type="protein sequence ID" value="ENSP00000385398.1"/>
    <property type="gene ID" value="ENSG00000138081.22"/>
</dbReference>
<dbReference type="Ensembl" id="ENST00000403359.8">
    <molecule id="Q86XK2-1"/>
    <property type="protein sequence ID" value="ENSP00000384823.4"/>
    <property type="gene ID" value="ENSG00000138081.22"/>
</dbReference>
<dbReference type="GeneID" id="80204"/>
<dbReference type="KEGG" id="hsa:80204"/>
<dbReference type="MANE-Select" id="ENST00000403359.8">
    <property type="protein sequence ID" value="ENSP00000384823.4"/>
    <property type="RefSeq nucleotide sequence ID" value="NM_001190274.2"/>
    <property type="RefSeq protein sequence ID" value="NP_001177203.1"/>
</dbReference>
<dbReference type="UCSC" id="uc002rwe.3">
    <molecule id="Q86XK2-1"/>
    <property type="organism name" value="human"/>
</dbReference>
<dbReference type="AGR" id="HGNC:13590"/>
<dbReference type="CTD" id="80204"/>
<dbReference type="DisGeNET" id="80204"/>
<dbReference type="GeneCards" id="FBXO11"/>
<dbReference type="HGNC" id="HGNC:13590">
    <property type="gene designation" value="FBXO11"/>
</dbReference>
<dbReference type="HPA" id="ENSG00000138081">
    <property type="expression patterns" value="Low tissue specificity"/>
</dbReference>
<dbReference type="MalaCards" id="FBXO11"/>
<dbReference type="MIM" id="607871">
    <property type="type" value="gene"/>
</dbReference>
<dbReference type="MIM" id="618089">
    <property type="type" value="phenotype"/>
</dbReference>
<dbReference type="neXtProt" id="NX_Q86XK2"/>
<dbReference type="OpenTargets" id="ENSG00000138081"/>
<dbReference type="PharmGKB" id="PA28031"/>
<dbReference type="VEuPathDB" id="HostDB:ENSG00000138081"/>
<dbReference type="eggNOG" id="KOG1777">
    <property type="taxonomic scope" value="Eukaryota"/>
</dbReference>
<dbReference type="GeneTree" id="ENSGT00530000063425"/>
<dbReference type="HOGENOM" id="CLU_005078_1_0_1"/>
<dbReference type="InParanoid" id="Q86XK2"/>
<dbReference type="OMA" id="KESFHQL"/>
<dbReference type="OrthoDB" id="427974at2759"/>
<dbReference type="PAN-GO" id="Q86XK2">
    <property type="GO annotations" value="3 GO annotations based on evolutionary models"/>
</dbReference>
<dbReference type="PhylomeDB" id="Q86XK2"/>
<dbReference type="TreeFam" id="TF313602"/>
<dbReference type="PathwayCommons" id="Q86XK2"/>
<dbReference type="Reactome" id="R-HSA-8951664">
    <property type="pathway name" value="Neddylation"/>
</dbReference>
<dbReference type="Reactome" id="R-HSA-983168">
    <property type="pathway name" value="Antigen processing: Ubiquitination &amp; Proteasome degradation"/>
</dbReference>
<dbReference type="SignaLink" id="Q86XK2"/>
<dbReference type="SIGNOR" id="Q86XK2"/>
<dbReference type="UniPathway" id="UPA00143"/>
<dbReference type="BioGRID-ORCS" id="80204">
    <property type="hits" value="122 hits in 1216 CRISPR screens"/>
</dbReference>
<dbReference type="ChiTaRS" id="FBXO11">
    <property type="organism name" value="human"/>
</dbReference>
<dbReference type="GeneWiki" id="FBXO11"/>
<dbReference type="GenomeRNAi" id="80204"/>
<dbReference type="Pharos" id="Q86XK2">
    <property type="development level" value="Tbio"/>
</dbReference>
<dbReference type="PRO" id="PR:Q86XK2"/>
<dbReference type="Proteomes" id="UP000005640">
    <property type="component" value="Chromosome 2"/>
</dbReference>
<dbReference type="RNAct" id="Q86XK2">
    <property type="molecule type" value="protein"/>
</dbReference>
<dbReference type="Bgee" id="ENSG00000138081">
    <property type="expression patterns" value="Expressed in cortical plate and 206 other cell types or tissues"/>
</dbReference>
<dbReference type="ExpressionAtlas" id="Q86XK2">
    <property type="expression patterns" value="baseline and differential"/>
</dbReference>
<dbReference type="GO" id="GO:0005694">
    <property type="term" value="C:chromosome"/>
    <property type="evidence" value="ECO:0007669"/>
    <property type="project" value="UniProtKB-SubCell"/>
</dbReference>
<dbReference type="GO" id="GO:0005737">
    <property type="term" value="C:cytoplasm"/>
    <property type="evidence" value="ECO:0000314"/>
    <property type="project" value="HGNC-UCL"/>
</dbReference>
<dbReference type="GO" id="GO:0005829">
    <property type="term" value="C:cytosol"/>
    <property type="evidence" value="ECO:0000304"/>
    <property type="project" value="Reactome"/>
</dbReference>
<dbReference type="GO" id="GO:0005730">
    <property type="term" value="C:nucleolus"/>
    <property type="evidence" value="ECO:0000314"/>
    <property type="project" value="HPA"/>
</dbReference>
<dbReference type="GO" id="GO:0005654">
    <property type="term" value="C:nucleoplasm"/>
    <property type="evidence" value="ECO:0000314"/>
    <property type="project" value="HPA"/>
</dbReference>
<dbReference type="GO" id="GO:0005634">
    <property type="term" value="C:nucleus"/>
    <property type="evidence" value="ECO:0000314"/>
    <property type="project" value="HGNC-UCL"/>
</dbReference>
<dbReference type="GO" id="GO:0000151">
    <property type="term" value="C:ubiquitin ligase complex"/>
    <property type="evidence" value="ECO:0000303"/>
    <property type="project" value="UniProtKB"/>
</dbReference>
<dbReference type="GO" id="GO:0016274">
    <property type="term" value="F:protein-arginine N-methyltransferase activity"/>
    <property type="evidence" value="ECO:0000314"/>
    <property type="project" value="BHF-UCL"/>
</dbReference>
<dbReference type="GO" id="GO:1990756">
    <property type="term" value="F:ubiquitin-like ligase-substrate adaptor activity"/>
    <property type="evidence" value="ECO:0000314"/>
    <property type="project" value="UniProtKB"/>
</dbReference>
<dbReference type="GO" id="GO:0004842">
    <property type="term" value="F:ubiquitin-protein transferase activity"/>
    <property type="evidence" value="ECO:0000303"/>
    <property type="project" value="UniProtKB"/>
</dbReference>
<dbReference type="GO" id="GO:0008270">
    <property type="term" value="F:zinc ion binding"/>
    <property type="evidence" value="ECO:0007669"/>
    <property type="project" value="UniProtKB-KW"/>
</dbReference>
<dbReference type="GO" id="GO:0010719">
    <property type="term" value="P:negative regulation of epithelial to mesenchymal transition"/>
    <property type="evidence" value="ECO:0000314"/>
    <property type="project" value="UniProtKB"/>
</dbReference>
<dbReference type="GO" id="GO:0043161">
    <property type="term" value="P:proteasome-mediated ubiquitin-dependent protein catabolic process"/>
    <property type="evidence" value="ECO:0000314"/>
    <property type="project" value="UniProtKB"/>
</dbReference>
<dbReference type="GO" id="GO:0036211">
    <property type="term" value="P:protein modification process"/>
    <property type="evidence" value="ECO:0000314"/>
    <property type="project" value="HGNC-UCL"/>
</dbReference>
<dbReference type="GO" id="GO:0016567">
    <property type="term" value="P:protein ubiquitination"/>
    <property type="evidence" value="ECO:0000303"/>
    <property type="project" value="UniProtKB"/>
</dbReference>
<dbReference type="GO" id="GO:0042981">
    <property type="term" value="P:regulation of apoptotic process"/>
    <property type="evidence" value="ECO:0000318"/>
    <property type="project" value="GO_Central"/>
</dbReference>
<dbReference type="GO" id="GO:0007605">
    <property type="term" value="P:sensory perception of sound"/>
    <property type="evidence" value="ECO:0007669"/>
    <property type="project" value="Ensembl"/>
</dbReference>
<dbReference type="GO" id="GO:0006511">
    <property type="term" value="P:ubiquitin-dependent protein catabolic process"/>
    <property type="evidence" value="ECO:0000318"/>
    <property type="project" value="GO_Central"/>
</dbReference>
<dbReference type="CDD" id="cd22091">
    <property type="entry name" value="F-box_FBXO11"/>
    <property type="match status" value="1"/>
</dbReference>
<dbReference type="CDD" id="cd19676">
    <property type="entry name" value="UBR-box_UBR6_FBXO11"/>
    <property type="match status" value="1"/>
</dbReference>
<dbReference type="FunFam" id="1.20.1280.50:FF:000003">
    <property type="entry name" value="F-box only protein 11"/>
    <property type="match status" value="1"/>
</dbReference>
<dbReference type="FunFam" id="2.160.20.10:FF:000005">
    <property type="entry name" value="F-box only protein 11"/>
    <property type="match status" value="1"/>
</dbReference>
<dbReference type="FunFam" id="2.160.20.10:FF:000006">
    <property type="entry name" value="F-box only protein 11"/>
    <property type="match status" value="1"/>
</dbReference>
<dbReference type="FunFam" id="2.160.20.10:FF:000007">
    <property type="entry name" value="F-box only protein 11"/>
    <property type="match status" value="1"/>
</dbReference>
<dbReference type="Gene3D" id="1.20.1280.50">
    <property type="match status" value="1"/>
</dbReference>
<dbReference type="Gene3D" id="2.160.20.10">
    <property type="entry name" value="Single-stranded right-handed beta-helix, Pectin lyase-like"/>
    <property type="match status" value="3"/>
</dbReference>
<dbReference type="InterPro" id="IPR039448">
    <property type="entry name" value="Beta_helix"/>
</dbReference>
<dbReference type="InterPro" id="IPR006633">
    <property type="entry name" value="Carb-bd_sugar_hydrolysis-dom"/>
</dbReference>
<dbReference type="InterPro" id="IPR036047">
    <property type="entry name" value="F-box-like_dom_sf"/>
</dbReference>
<dbReference type="InterPro" id="IPR001810">
    <property type="entry name" value="F-box_dom"/>
</dbReference>
<dbReference type="InterPro" id="IPR047505">
    <property type="entry name" value="F-box_FBXO11"/>
</dbReference>
<dbReference type="InterPro" id="IPR047504">
    <property type="entry name" value="FBXO11_UBR-box"/>
</dbReference>
<dbReference type="InterPro" id="IPR007742">
    <property type="entry name" value="NosD_dom"/>
</dbReference>
<dbReference type="InterPro" id="IPR022441">
    <property type="entry name" value="Para_beta_helix_rpt-2"/>
</dbReference>
<dbReference type="InterPro" id="IPR006626">
    <property type="entry name" value="PbH1"/>
</dbReference>
<dbReference type="InterPro" id="IPR012334">
    <property type="entry name" value="Pectin_lyas_fold"/>
</dbReference>
<dbReference type="InterPro" id="IPR011050">
    <property type="entry name" value="Pectin_lyase_fold/virulence"/>
</dbReference>
<dbReference type="InterPro" id="IPR051550">
    <property type="entry name" value="SCF-Subunits/Alg-Epimerases"/>
</dbReference>
<dbReference type="InterPro" id="IPR003126">
    <property type="entry name" value="Znf_UBR"/>
</dbReference>
<dbReference type="NCBIfam" id="TIGR03804">
    <property type="entry name" value="para_beta_helix"/>
    <property type="match status" value="4"/>
</dbReference>
<dbReference type="PANTHER" id="PTHR22990">
    <property type="entry name" value="F-BOX ONLY PROTEIN"/>
    <property type="match status" value="1"/>
</dbReference>
<dbReference type="PANTHER" id="PTHR22990:SF20">
    <property type="entry name" value="F-BOX ONLY PROTEIN 11"/>
    <property type="match status" value="1"/>
</dbReference>
<dbReference type="Pfam" id="PF13229">
    <property type="entry name" value="Beta_helix"/>
    <property type="match status" value="2"/>
</dbReference>
<dbReference type="Pfam" id="PF12937">
    <property type="entry name" value="F-box-like"/>
    <property type="match status" value="1"/>
</dbReference>
<dbReference type="Pfam" id="PF05048">
    <property type="entry name" value="NosD"/>
    <property type="match status" value="1"/>
</dbReference>
<dbReference type="Pfam" id="PF02207">
    <property type="entry name" value="zf-UBR"/>
    <property type="match status" value="1"/>
</dbReference>
<dbReference type="SMART" id="SM00722">
    <property type="entry name" value="CASH"/>
    <property type="match status" value="3"/>
</dbReference>
<dbReference type="SMART" id="SM00256">
    <property type="entry name" value="FBOX"/>
    <property type="match status" value="1"/>
</dbReference>
<dbReference type="SMART" id="SM00710">
    <property type="entry name" value="PbH1"/>
    <property type="match status" value="19"/>
</dbReference>
<dbReference type="SMART" id="SM00396">
    <property type="entry name" value="ZnF_UBR1"/>
    <property type="match status" value="1"/>
</dbReference>
<dbReference type="SUPFAM" id="SSF81383">
    <property type="entry name" value="F-box domain"/>
    <property type="match status" value="1"/>
</dbReference>
<dbReference type="SUPFAM" id="SSF51126">
    <property type="entry name" value="Pectin lyase-like"/>
    <property type="match status" value="3"/>
</dbReference>
<dbReference type="PROSITE" id="PS50181">
    <property type="entry name" value="FBOX"/>
    <property type="match status" value="1"/>
</dbReference>
<dbReference type="PROSITE" id="PS51157">
    <property type="entry name" value="ZF_UBR"/>
    <property type="match status" value="1"/>
</dbReference>
<proteinExistence type="evidence at protein level"/>
<comment type="function">
    <text evidence="6 7 8 9 10 11 12 13 16 19 20 21">Substrate recognition component of a SCF (SKP1-CUL1-F-box protein) E3 ubiquitin-protein ligase complex which mediates the ubiquitination and subsequent proteasomal degradation of target proteins, such as DTL/CDT2, BCL6, SNAI1 and PRDM1/BLIMP1 (PubMed:17098746, PubMed:22113614, PubMed:23478441, PubMed:23478445, PubMed:23892434, PubMed:24613396, PubMed:24968003, PubMed:25827072, PubMed:29059170). The SCF(FBXO11) complex mediates ubiquitination and degradation of BCL6, thereby playing a role in the germinal center B-cells terminal differentiation toward memory B-cells and plasma cells (PubMed:22113614). The SCF(FBXO11) complex also mediates ubiquitination and degradation of DTL, an important step for the regulation of TGF-beta signaling, cell migration and the timing of the cell-cycle progression and exit (PubMed:23478441, PubMed:23478445). The SCF(FBXO11) complex also catalyzes ubiquitination and degradation of GSK3B-phosphorylated SNAI1 (PubMed:25827072, PubMed:29059170). Binds to and neddylates phosphorylated p53/TP53, inhibiting its transcriptional activity (PubMed:17098746). Plays a role in the regulatiom of erythropoiesis but not myelopoiesis or megakaryopoiesis (PubMed:33156908). Mechanistically, activates erythroid genes by mediating the degradation of BAHD1, a heterochromatin-associated protein that recruits corepressors to H3K27me3 marks (PubMed:33156908). Participates in macrophage cell death and inflammation in response to bacterial toxins by regulating the expression of complement 5a receptor 1/C5AR1 and IL-1beta (PubMed:33156908). Acts as a critical regulator to determine the level of MHC-II by mediating the recognition of degron at the P/S/T domain of CIITA leading to its ubiquitination and subsequent degradation via the proteasome (PubMed:37279268). Participates in the antiviral repsonse by initiating the activation of TBK1-IRF3-IFN-I axis (PubMed:36897010). Mediates the 'Lys-63'-linked ubiquitination of TRAF3 to strengthen the interaction between TRAF3 and TBK1 (PubMed:36897010).</text>
</comment>
<comment type="pathway">
    <text evidence="6 13 16">Protein modification; protein ubiquitination.</text>
</comment>
<comment type="subunit">
    <text evidence="8 9 21">Component of the SCF(FBXO11) complex consisting of CUL1, RBX1, SKP1 and FBXO11 (PubMed:23478441, PubMed:23478445). Interacts with CIITA (PubMed:37279268).</text>
</comment>
<comment type="interaction">
    <interactant intactId="EBI-1047804">
        <id>Q86XK2</id>
    </interactant>
    <interactant intactId="EBI-765407">
        <id>P41182</id>
        <label>BCL6</label>
    </interactant>
    <organismsDiffer>false</organismsDiffer>
    <experiments>9</experiments>
</comment>
<comment type="interaction">
    <interactant intactId="EBI-1047804">
        <id>Q86XK2</id>
    </interactant>
    <interactant intactId="EBI-307486">
        <id>P63208</id>
        <label>SKP1</label>
    </interactant>
    <organismsDiffer>false</organismsDiffer>
    <experiments>11</experiments>
</comment>
<comment type="interaction">
    <interactant intactId="EBI-1047804">
        <id>Q86XK2</id>
    </interactant>
    <interactant intactId="EBI-307497">
        <id>P63208-1</id>
        <label>SKP1</label>
    </interactant>
    <organismsDiffer>false</organismsDiffer>
    <experiments>5</experiments>
</comment>
<comment type="interaction">
    <interactant intactId="EBI-1047804">
        <id>Q86XK2</id>
    </interactant>
    <interactant intactId="EBI-1045459">
        <id>O95863</id>
        <label>SNAI1</label>
    </interactant>
    <organismsDiffer>false</organismsDiffer>
    <experiments>6</experiments>
</comment>
<comment type="interaction">
    <interactant intactId="EBI-1047804">
        <id>Q86XK2</id>
    </interactant>
    <interactant intactId="EBI-366083">
        <id>P04637</id>
        <label>TP53</label>
    </interactant>
    <organismsDiffer>false</organismsDiffer>
    <experiments>4</experiments>
</comment>
<comment type="subcellular location">
    <subcellularLocation>
        <location evidence="5 6 7 13">Nucleus</location>
    </subcellularLocation>
    <subcellularLocation>
        <location evidence="10">Chromosome</location>
    </subcellularLocation>
</comment>
<comment type="alternative products">
    <event type="alternative splicing"/>
    <isoform>
        <id>Q86XK2-1</id>
        <name>1</name>
        <sequence type="displayed"/>
    </isoform>
    <isoform>
        <id>Q86XK2-2</id>
        <name>2</name>
        <sequence type="described" ref="VSP_022574 VSP_008863 VSP_008864"/>
    </isoform>
    <isoform>
        <id>Q86XK2-6</id>
        <name>6</name>
        <sequence type="described" ref="VSP_022573"/>
    </isoform>
    <isoform>
        <id>Q86XK2-3</id>
        <name>3</name>
        <sequence type="described" ref="VSP_022573 VSP_008862"/>
    </isoform>
    <isoform>
        <id>Q86XK2-4</id>
        <name>4</name>
        <sequence type="described" ref="VSP_008860 VSP_008861"/>
    </isoform>
    <isoform>
        <id>Q86XK2-5</id>
        <name>5</name>
        <sequence type="described" ref="VSP_008865"/>
    </isoform>
</comment>
<comment type="tissue specificity">
    <text evidence="4">Isoform 5 is expressed in keratinocytes, fibroblasts and melanocytes.</text>
</comment>
<comment type="developmental stage">
    <text evidence="10">Protein levels increase during G1 and S phases to decline as cells progress through G2 to enter in G1 phase of the next cell cycle.</text>
</comment>
<comment type="disease" evidence="14 17 18">
    <disease id="DI-05311">
        <name>Intellectual developmental disorder with dysmorphic facies and behavioral abnormalities</name>
        <acronym>IDDFBA</acronym>
        <description>An autosomal dominant developmental disorder with variable manifestations and onset in infancy or first years of life. Clinical features include intellectual disability, speech delay, hyperkinetic disorder, hyperactivity, seizures, pre- and postnatal growth retardation, microcephaly, and facial dysmorphism.</description>
        <dbReference type="MIM" id="618089"/>
    </disease>
    <text>The disease is caused by variants affecting the gene represented in this entry.</text>
</comment>
<comment type="disease">
    <text evidence="7">Defects in FBXO11 may be a cause of diffuse large B-cell lymphoma by allowing the accumulation of BCL6, an oncoprotein that has a critical role in lymphomas.</text>
</comment>
<comment type="caution">
    <molecule>Isoform 2</molecule>
    <text evidence="30">Has been initially named PRMT9 and reported to act as an arginine methyltransferase that can catalyze the formation of omega-N monomethylarginine (MMA) as well as symmetrical and asymmetrical dimethylarginine (sDMA and aDMA), however no further works support these observations (PubMed:16487488). It should not be confused with official PRMT9 (AC Q6P2P2).</text>
</comment>
<comment type="sequence caution" evidence="29">
    <conflict type="miscellaneous discrepancy">
        <sequence resource="EMBL-CDS" id="AAF76888"/>
    </conflict>
    <text>Intron retention.</text>
</comment>
<comment type="sequence caution" evidence="29">
    <conflict type="frameshift">
        <sequence resource="EMBL-CDS" id="AAN76518"/>
    </conflict>
</comment>
<comment type="sequence caution" evidence="29">
    <conflict type="erroneous gene model prediction">
        <sequence resource="EMBL-CDS" id="AAY24083"/>
    </conflict>
</comment>
<comment type="sequence caution" evidence="29">
    <conflict type="erroneous initiation">
        <sequence resource="EMBL-CDS" id="BAB15143"/>
    </conflict>
    <text>Truncated N-terminus.</text>
</comment>
<gene>
    <name evidence="26 31" type="primary">FBXO11</name>
    <name type="synonym">FBX11</name>
    <name type="synonym">PRMT9</name>
    <name type="synonym">VIT1</name>
    <name type="ORF">UG063H01</name>
</gene>
<protein>
    <recommendedName>
        <fullName>F-box only protein 11</fullName>
    </recommendedName>
    <alternativeName>
        <fullName>Protein arginine N-methyltransferase 9</fullName>
    </alternativeName>
    <alternativeName>
        <fullName>Vitiligo-associated protein 1</fullName>
        <shortName>VIT-1</shortName>
    </alternativeName>
</protein>
<organism>
    <name type="scientific">Homo sapiens</name>
    <name type="common">Human</name>
    <dbReference type="NCBI Taxonomy" id="9606"/>
    <lineage>
        <taxon>Eukaryota</taxon>
        <taxon>Metazoa</taxon>
        <taxon>Chordata</taxon>
        <taxon>Craniata</taxon>
        <taxon>Vertebrata</taxon>
        <taxon>Euteleostomi</taxon>
        <taxon>Mammalia</taxon>
        <taxon>Eutheria</taxon>
        <taxon>Euarchontoglires</taxon>
        <taxon>Primates</taxon>
        <taxon>Haplorrhini</taxon>
        <taxon>Catarrhini</taxon>
        <taxon>Hominidae</taxon>
        <taxon>Homo</taxon>
    </lineage>
</organism>
<feature type="chain" id="PRO_0000273574" description="F-box only protein 11">
    <location>
        <begin position="1"/>
        <end position="927"/>
    </location>
</feature>
<feature type="domain" description="F-box" evidence="1">
    <location>
        <begin position="153"/>
        <end position="199"/>
    </location>
</feature>
<feature type="repeat" description="PbH1 1">
    <location>
        <begin position="395"/>
        <end position="417"/>
    </location>
</feature>
<feature type="repeat" description="PbH1 2">
    <location>
        <begin position="418"/>
        <end position="440"/>
    </location>
</feature>
<feature type="repeat" description="PbH1 3">
    <location>
        <begin position="441"/>
        <end position="463"/>
    </location>
</feature>
<feature type="repeat" description="PbH1 4">
    <location>
        <begin position="464"/>
        <end position="486"/>
    </location>
</feature>
<feature type="repeat" description="PbH1 5">
    <location>
        <begin position="487"/>
        <end position="509"/>
    </location>
</feature>
<feature type="repeat" description="PbH1 6">
    <location>
        <begin position="510"/>
        <end position="532"/>
    </location>
</feature>
<feature type="repeat" description="PbH1 7">
    <location>
        <begin position="533"/>
        <end position="555"/>
    </location>
</feature>
<feature type="repeat" description="PbH1 8">
    <location>
        <begin position="556"/>
        <end position="578"/>
    </location>
</feature>
<feature type="repeat" description="PbH1 9">
    <location>
        <begin position="579"/>
        <end position="601"/>
    </location>
</feature>
<feature type="repeat" description="PbH1 10">
    <location>
        <begin position="602"/>
        <end position="624"/>
    </location>
</feature>
<feature type="repeat" description="PbH1 11">
    <location>
        <begin position="625"/>
        <end position="647"/>
    </location>
</feature>
<feature type="repeat" description="PbH1 12">
    <location>
        <begin position="648"/>
        <end position="670"/>
    </location>
</feature>
<feature type="repeat" description="PbH1 13">
    <location>
        <begin position="671"/>
        <end position="693"/>
    </location>
</feature>
<feature type="repeat" description="PbH1 14">
    <location>
        <begin position="694"/>
        <end position="716"/>
    </location>
</feature>
<feature type="repeat" description="PbH1 15">
    <location>
        <begin position="717"/>
        <end position="739"/>
    </location>
</feature>
<feature type="repeat" description="PbH1 16">
    <location>
        <begin position="740"/>
        <end position="762"/>
    </location>
</feature>
<feature type="repeat" description="PbH1 17">
    <location>
        <begin position="763"/>
        <end position="785"/>
    </location>
</feature>
<feature type="repeat" description="PbH1 18">
    <location>
        <begin position="786"/>
        <end position="808"/>
    </location>
</feature>
<feature type="repeat" description="PbH1 19">
    <location>
        <begin position="809"/>
        <end position="830"/>
    </location>
</feature>
<feature type="zinc finger region" description="UBR-type" evidence="2">
    <location>
        <begin position="833"/>
        <end position="904"/>
    </location>
</feature>
<feature type="region of interest" description="Disordered" evidence="3">
    <location>
        <begin position="1"/>
        <end position="132"/>
    </location>
</feature>
<feature type="compositionally biased region" description="Basic residues" evidence="3">
    <location>
        <begin position="7"/>
        <end position="16"/>
    </location>
</feature>
<feature type="compositionally biased region" description="Low complexity" evidence="3">
    <location>
        <begin position="17"/>
        <end position="27"/>
    </location>
</feature>
<feature type="compositionally biased region" description="Pro residues" evidence="3">
    <location>
        <begin position="28"/>
        <end position="68"/>
    </location>
</feature>
<feature type="compositionally biased region" description="Polar residues" evidence="3">
    <location>
        <begin position="114"/>
        <end position="129"/>
    </location>
</feature>
<feature type="splice variant" id="VSP_022574" description="In isoform 2." evidence="24">
    <location>
        <begin position="1"/>
        <end position="209"/>
    </location>
</feature>
<feature type="splice variant" id="VSP_022573" description="In isoform 3 and isoform 6." evidence="24 25 27 28">
    <location>
        <begin position="1"/>
        <end position="84"/>
    </location>
</feature>
<feature type="splice variant" id="VSP_008860" description="In isoform 4." evidence="22">
    <original>KRLYMEVFEYTRPMM</original>
    <variation>LGEVAHAYNPSTLGG</variation>
    <location>
        <begin position="197"/>
        <end position="211"/>
    </location>
</feature>
<feature type="splice variant" id="VSP_008861" description="In isoform 4." evidence="22">
    <location>
        <begin position="212"/>
        <end position="927"/>
    </location>
</feature>
<feature type="splice variant" id="VSP_008862" description="In isoform 3." evidence="27">
    <location>
        <begin position="670"/>
        <end position="927"/>
    </location>
</feature>
<feature type="splice variant" id="VSP_008863" description="In isoform 2." evidence="24">
    <original>LLEENDIFRNAQAGVLISTNSHPILRK</original>
    <variation>IVVNFALVKNPVFHYSSISLMINDIAN</variation>
    <location>
        <begin position="744"/>
        <end position="770"/>
    </location>
</feature>
<feature type="splice variant" id="VSP_008864" description="In isoform 2." evidence="24">
    <location>
        <begin position="771"/>
        <end position="927"/>
    </location>
</feature>
<feature type="splice variant" id="VSP_008865" description="In isoform 5." evidence="23">
    <original>R</original>
    <variation>RYVAHLLDILPNYFPPHFSNIWVSFCFR</variation>
    <location>
        <position position="885"/>
    </location>
</feature>
<feature type="sequence variant" id="VAR_024441" description="In dbSNP:rs17036993.">
    <original>T</original>
    <variation>S</variation>
    <location>
        <position position="126"/>
    </location>
</feature>
<feature type="sequence variant" id="VAR_081341" description="In IDDFBA; dbSNP:rs1553342109." evidence="18">
    <original>R</original>
    <variation>S</variation>
    <location>
        <position position="138"/>
    </location>
</feature>
<feature type="sequence variant" id="VAR_081342" description="In IDDFBA; dbSNP:rs1672806975." evidence="18">
    <original>Q</original>
    <variation>R</variation>
    <location>
        <position position="156"/>
    </location>
</feature>
<feature type="sequence variant" id="VAR_070073" description="Found in a patient with lymphoma; dbSNP:rs1672530798." evidence="7">
    <original>Y</original>
    <variation>C</variation>
    <location>
        <position position="206"/>
    </location>
</feature>
<feature type="sequence variant" id="VAR_081343" description="In IDDFBA; dbSNP:rs1553338592." evidence="18">
    <original>I</original>
    <variation>V</variation>
    <location>
        <position position="538"/>
    </location>
</feature>
<feature type="sequence variant" id="VAR_081344" description="In IDDFBA." evidence="18">
    <location>
        <begin position="609"/>
        <end position="927"/>
    </location>
</feature>
<feature type="sequence variant" id="VAR_081345" description="In IDDFBA; dbSNP:rs1671196392." evidence="18">
    <original>T</original>
    <variation>R</variation>
    <location>
        <position position="623"/>
    </location>
</feature>
<feature type="sequence variant" id="VAR_070074" description="Found in a lymphoma cell line; diminishes ubiquitin-mediated degradation of BCL6." evidence="7">
    <original>Y</original>
    <variation>C</variation>
    <location>
        <position position="644"/>
    </location>
</feature>
<feature type="sequence variant" id="VAR_070075" description="Found in a patient with lymphoma; strongly diminishes ubiquitin-mediated degradation of BCL6." evidence="7">
    <original>G</original>
    <variation>E</variation>
    <location>
        <position position="684"/>
    </location>
</feature>
<feature type="sequence variant" id="VAR_081346" description="In IDDFBA." evidence="18">
    <location>
        <begin position="697"/>
        <end position="927"/>
    </location>
</feature>
<feature type="sequence variant" id="VAR_070076" description="Found in a patient with lymphoma; strongly diminishes ubiquitin-mediated degradation of BCL6; dbSNP:rs1572764737." evidence="7">
    <original>K</original>
    <variation>N</variation>
    <location>
        <position position="715"/>
    </location>
</feature>
<feature type="sequence variant" id="VAR_070077" description="Found in a patient with lymphoma; almost abolishes ubiquitin-mediated degradation of BCL6." evidence="7">
    <original>K</original>
    <variation>Q</variation>
    <location>
        <position position="715"/>
    </location>
</feature>
<feature type="sequence variant" id="VAR_081347" description="In IDDFBA; dbSNP:rs1553335247." evidence="18">
    <original>S</original>
    <variation>P</variation>
    <location>
        <position position="840"/>
    </location>
</feature>
<feature type="sequence variant" id="VAR_081348" description="Found in a patient with severe intellectual disability and muscular hypotonia; uncertain significance." evidence="15">
    <original>V</original>
    <variation>M</variation>
    <location>
        <position position="866"/>
    </location>
</feature>
<feature type="sequence variant" id="VAR_081349" description="In IDDFBA; dbSNP:rs1670358755." evidence="18">
    <original>A</original>
    <variation>D</variation>
    <location>
        <position position="892"/>
    </location>
</feature>
<feature type="sequence variant" id="VAR_081350" description="In IDDFBA." evidence="18">
    <location>
        <begin position="904"/>
        <end position="927"/>
    </location>
</feature>
<feature type="sequence variant" id="VAR_081351" description="In IDDFBA; dbSNP:rs1670356255." evidence="18">
    <original>P</original>
    <variation>R</variation>
    <location>
        <position position="905"/>
    </location>
</feature>
<feature type="sequence variant" id="VAR_081352" description="In IDDFBA; dbSNP:rs1670355281." evidence="18">
    <original>D</original>
    <variation>G</variation>
    <location>
        <position position="910"/>
    </location>
</feature>
<feature type="sequence variant" id="VAR_081353" description="In IDDFBA." evidence="14 17">
    <location>
        <begin position="913"/>
        <end position="927"/>
    </location>
</feature>
<feature type="mutagenesis site" description="Greatly reduced ability to bind PRDM1 and reduced proteolysis of PRDM1." evidence="11">
    <original>Q</original>
    <variation>L</variation>
    <location>
        <position position="575"/>
    </location>
</feature>
<feature type="sequence conflict" description="In Ref. 4; BAB14214." evidence="29" ref="4">
    <original>L</original>
    <variation>S</variation>
    <location>
        <position position="239"/>
    </location>
</feature>
<feature type="sequence conflict" description="In Ref. 2; AAN76518." evidence="29" ref="2">
    <original>R</original>
    <variation>G</variation>
    <location>
        <position position="577"/>
    </location>
</feature>
<feature type="sequence conflict" description="In Ref. 3; BAD97312." evidence="29" ref="3">
    <original>R</original>
    <variation>G</variation>
    <location>
        <position position="632"/>
    </location>
</feature>
<feature type="sequence conflict" description="In Ref. 1; AAV87312 and 7; AAH43258." evidence="29" ref="1 7">
    <original>G</original>
    <variation>S</variation>
    <location>
        <position position="903"/>
    </location>
</feature>
<feature type="helix" evidence="32">
    <location>
        <begin position="839"/>
        <end position="844"/>
    </location>
</feature>
<feature type="strand" evidence="32">
    <location>
        <begin position="845"/>
        <end position="856"/>
    </location>
</feature>
<feature type="helix" evidence="32">
    <location>
        <begin position="866"/>
        <end position="872"/>
    </location>
</feature>
<feature type="strand" evidence="32">
    <location>
        <begin position="878"/>
        <end position="884"/>
    </location>
</feature>
<feature type="turn" evidence="32">
    <location>
        <begin position="889"/>
        <end position="893"/>
    </location>
</feature>
<feature type="strand" evidence="32">
    <location>
        <begin position="895"/>
        <end position="897"/>
    </location>
</feature>
<accession>Q86XK2</accession>
<accession>A1L491</accession>
<accession>Q52ZP1</accession>
<accession>Q53EP7</accession>
<accession>Q53RT5</accession>
<accession>Q8IXG3</accession>
<accession>Q96E90</accession>
<accession>Q9H6V8</accession>
<accession>Q9H9L1</accession>
<accession>Q9NR14</accession>
<accession>Q9UFK1</accession>
<accession>Q9UHI1</accession>
<accession>Q9UKC2</accession>
<name>FBX11_HUMAN</name>
<evidence type="ECO:0000255" key="1">
    <source>
        <dbReference type="PROSITE-ProRule" id="PRU00080"/>
    </source>
</evidence>
<evidence type="ECO:0000255" key="2">
    <source>
        <dbReference type="PROSITE-ProRule" id="PRU00508"/>
    </source>
</evidence>
<evidence type="ECO:0000256" key="3">
    <source>
        <dbReference type="SAM" id="MobiDB-lite"/>
    </source>
</evidence>
<evidence type="ECO:0000269" key="4">
    <source>
    </source>
</evidence>
<evidence type="ECO:0000269" key="5">
    <source>
    </source>
</evidence>
<evidence type="ECO:0000269" key="6">
    <source>
    </source>
</evidence>
<evidence type="ECO:0000269" key="7">
    <source>
    </source>
</evidence>
<evidence type="ECO:0000269" key="8">
    <source>
    </source>
</evidence>
<evidence type="ECO:0000269" key="9">
    <source>
    </source>
</evidence>
<evidence type="ECO:0000269" key="10">
    <source>
    </source>
</evidence>
<evidence type="ECO:0000269" key="11">
    <source>
    </source>
</evidence>
<evidence type="ECO:0000269" key="12">
    <source>
    </source>
</evidence>
<evidence type="ECO:0000269" key="13">
    <source>
    </source>
</evidence>
<evidence type="ECO:0000269" key="14">
    <source>
    </source>
</evidence>
<evidence type="ECO:0000269" key="15">
    <source>
    </source>
</evidence>
<evidence type="ECO:0000269" key="16">
    <source>
    </source>
</evidence>
<evidence type="ECO:0000269" key="17">
    <source>
    </source>
</evidence>
<evidence type="ECO:0000269" key="18">
    <source>
    </source>
</evidence>
<evidence type="ECO:0000269" key="19">
    <source>
    </source>
</evidence>
<evidence type="ECO:0000269" key="20">
    <source>
    </source>
</evidence>
<evidence type="ECO:0000269" key="21">
    <source>
    </source>
</evidence>
<evidence type="ECO:0000303" key="22">
    <source>
    </source>
</evidence>
<evidence type="ECO:0000303" key="23">
    <source>
    </source>
</evidence>
<evidence type="ECO:0000303" key="24">
    <source>
    </source>
</evidence>
<evidence type="ECO:0000303" key="25">
    <source>
    </source>
</evidence>
<evidence type="ECO:0000303" key="26">
    <source>
    </source>
</evidence>
<evidence type="ECO:0000303" key="27">
    <source ref="2"/>
</evidence>
<evidence type="ECO:0000303" key="28">
    <source ref="3"/>
</evidence>
<evidence type="ECO:0000305" key="29"/>
<evidence type="ECO:0000305" key="30">
    <source>
    </source>
</evidence>
<evidence type="ECO:0000312" key="31">
    <source>
        <dbReference type="HGNC" id="HGNC:13590"/>
    </source>
</evidence>
<evidence type="ECO:0007829" key="32">
    <source>
        <dbReference type="PDB" id="5VMD"/>
    </source>
</evidence>